<gene>
    <name type="primary">ND6</name>
    <name type="synonym">NAD6</name>
    <name type="ordered locus">AtMg00270</name>
</gene>
<reference key="1">
    <citation type="journal article" date="1997" name="Nat. Genet.">
        <title>The mitochondrial genome of Arabidopsis thaliana contains 57 genes in 366,924 nucleotides.</title>
        <authorList>
            <person name="Unseld M."/>
            <person name="Marienfeld J.R."/>
            <person name="Brandt P."/>
            <person name="Brennicke A."/>
        </authorList>
    </citation>
    <scope>NUCLEOTIDE SEQUENCE [LARGE SCALE GENOMIC DNA]</scope>
    <source>
        <strain>cv. C24</strain>
    </source>
</reference>
<reference key="2">
    <citation type="journal article" date="1999" name="Proc. Natl. Acad. Sci. U.S.A.">
        <title>RNA editing in Arabidopsis mitochondria effects 441 C to U changes in ORFs.</title>
        <authorList>
            <person name="Giege P."/>
            <person name="Brennicke A."/>
        </authorList>
    </citation>
    <scope>NUCLEOTIDE SEQUENCE [GENOMIC DNA]</scope>
    <scope>RNA EDITING</scope>
</reference>
<reference key="3">
    <citation type="journal article" date="2018" name="Plant Cell">
        <title>Correction of persistent errors in Arabidopsis reference mitochondrial genomes.</title>
        <authorList>
            <person name="Sloan D.B."/>
            <person name="Wu Z."/>
            <person name="Sharbrough J."/>
        </authorList>
    </citation>
    <scope>NUCLEOTIDE SEQUENCE [LARGE SCALE GENOMIC DNA]</scope>
    <scope>RNA EDITING</scope>
    <source>
        <strain>cv. Columbia</strain>
    </source>
</reference>
<reference key="4">
    <citation type="journal article" date="1999" name="Nature">
        <title>Sequence and analysis of chromosome 2 of the plant Arabidopsis thaliana.</title>
        <authorList>
            <person name="Lin X."/>
            <person name="Kaul S."/>
            <person name="Rounsley S.D."/>
            <person name="Shea T.P."/>
            <person name="Benito M.-I."/>
            <person name="Town C.D."/>
            <person name="Fujii C.Y."/>
            <person name="Mason T.M."/>
            <person name="Bowman C.L."/>
            <person name="Barnstead M.E."/>
            <person name="Feldblyum T.V."/>
            <person name="Buell C.R."/>
            <person name="Ketchum K.A."/>
            <person name="Lee J.J."/>
            <person name="Ronning C.M."/>
            <person name="Koo H.L."/>
            <person name="Moffat K.S."/>
            <person name="Cronin L.A."/>
            <person name="Shen M."/>
            <person name="Pai G."/>
            <person name="Van Aken S."/>
            <person name="Umayam L."/>
            <person name="Tallon L.J."/>
            <person name="Gill J.E."/>
            <person name="Adams M.D."/>
            <person name="Carrera A.J."/>
            <person name="Creasy T.H."/>
            <person name="Goodman H.M."/>
            <person name="Somerville C.R."/>
            <person name="Copenhaver G.P."/>
            <person name="Preuss D."/>
            <person name="Nierman W.C."/>
            <person name="White O."/>
            <person name="Eisen J.A."/>
            <person name="Salzberg S.L."/>
            <person name="Fraser C.M."/>
            <person name="Venter J.C."/>
        </authorList>
    </citation>
    <scope>NUCLEOTIDE SEQUENCE [LARGE SCALE GENOMIC DNA] (AT2G07731)</scope>
    <source>
        <strain>cv. Columbia</strain>
    </source>
</reference>
<reference key="5">
    <citation type="journal article" date="2008" name="Genetics">
        <title>Genetic architecture of mitochondrial editing in Arabidopsis thaliana.</title>
        <authorList>
            <person name="Bentolila S."/>
            <person name="Elliott L.E."/>
            <person name="Hanson M.R."/>
        </authorList>
    </citation>
    <scope>NUCLEOTIDE SEQUENCE [MRNA] OF 25-195</scope>
    <scope>RNA EDITING</scope>
    <source>
        <strain>cv. Columbia</strain>
        <strain>cv. Landsberg erecta</strain>
        <tissue>Rosette leaf</tissue>
    </source>
</reference>
<reference evidence="7 8" key="6">
    <citation type="journal article" date="2023" name="Nat. Plants">
        <title>Cryo-EM structure of the respiratory I + III(2) supercomplex from Arabidopsis thaliana at 2 A resolution.</title>
        <authorList>
            <person name="Klusch N."/>
            <person name="Dreimann M."/>
            <person name="Senkler J."/>
            <person name="Rugen N."/>
            <person name="Kuehlbrandt W."/>
            <person name="Braun H.P."/>
        </authorList>
    </citation>
    <scope>STRUCTURE BY ELECTRON MICROSCOPY (2.13 ANGSTROMS)</scope>
</reference>
<sequence>MILSVLSSLALVSGLMVVRAKNPVHSVLFFILVFCDTSGLLLLLGLDFFAMIFLVVYIGAIAVLFLFVVMMFHIQIAEIHEEVLRYLPVSGIIGLIFWWEMFFILDNESIPLLPTQRNTTSLRYTVYAGKVRSWTNLETLGNLLYTYYFVWFLVSSLILLVAMIGAIVLTMHRTTKVKRQDVFRRNAIDFRRTIMRRTTDPLTIY</sequence>
<organism>
    <name type="scientific">Arabidopsis thaliana</name>
    <name type="common">Mouse-ear cress</name>
    <dbReference type="NCBI Taxonomy" id="3702"/>
    <lineage>
        <taxon>Eukaryota</taxon>
        <taxon>Viridiplantae</taxon>
        <taxon>Streptophyta</taxon>
        <taxon>Embryophyta</taxon>
        <taxon>Tracheophyta</taxon>
        <taxon>Spermatophyta</taxon>
        <taxon>Magnoliopsida</taxon>
        <taxon>eudicotyledons</taxon>
        <taxon>Gunneridae</taxon>
        <taxon>Pentapetalae</taxon>
        <taxon>rosids</taxon>
        <taxon>malvids</taxon>
        <taxon>Brassicales</taxon>
        <taxon>Brassicaceae</taxon>
        <taxon>Camelineae</taxon>
        <taxon>Arabidopsis</taxon>
    </lineage>
</organism>
<name>NU6M_ARATH</name>
<feature type="chain" id="PRO_0000118250" description="NADH-ubiquinone oxidoreductase chain 6">
    <location>
        <begin position="1"/>
        <end position="205"/>
    </location>
</feature>
<feature type="transmembrane region" description="Helical" evidence="2">
    <location>
        <begin position="48"/>
        <end position="68"/>
    </location>
</feature>
<feature type="transmembrane region" description="Helical" evidence="2">
    <location>
        <begin position="86"/>
        <end position="106"/>
    </location>
</feature>
<feature type="transmembrane region" description="Helical" evidence="2">
    <location>
        <begin position="150"/>
        <end position="170"/>
    </location>
</feature>
<feature type="helix" evidence="9">
    <location>
        <begin position="2"/>
        <end position="19"/>
    </location>
</feature>
<feature type="helix" evidence="9">
    <location>
        <begin position="23"/>
        <end position="43"/>
    </location>
</feature>
<feature type="helix" evidence="9">
    <location>
        <begin position="47"/>
        <end position="56"/>
    </location>
</feature>
<feature type="turn" evidence="9">
    <location>
        <begin position="57"/>
        <end position="60"/>
    </location>
</feature>
<feature type="helix" evidence="9">
    <location>
        <begin position="61"/>
        <end position="72"/>
    </location>
</feature>
<feature type="helix" evidence="9">
    <location>
        <begin position="76"/>
        <end position="79"/>
    </location>
</feature>
<feature type="helix" evidence="9">
    <location>
        <begin position="84"/>
        <end position="86"/>
    </location>
</feature>
<feature type="helix" evidence="9">
    <location>
        <begin position="87"/>
        <end position="101"/>
    </location>
</feature>
<feature type="helix" evidence="9">
    <location>
        <begin position="104"/>
        <end position="108"/>
    </location>
</feature>
<feature type="helix" evidence="9">
    <location>
        <begin position="119"/>
        <end position="122"/>
    </location>
</feature>
<feature type="helix" evidence="9">
    <location>
        <begin position="127"/>
        <end position="130"/>
    </location>
</feature>
<feature type="helix" evidence="9">
    <location>
        <begin position="136"/>
        <end position="144"/>
    </location>
</feature>
<feature type="turn" evidence="9">
    <location>
        <begin position="145"/>
        <end position="148"/>
    </location>
</feature>
<feature type="helix" evidence="9">
    <location>
        <begin position="149"/>
        <end position="170"/>
    </location>
</feature>
<dbReference type="EC" id="7.1.1.2"/>
<dbReference type="EMBL" id="Y08501">
    <property type="protein sequence ID" value="CAA69769.3"/>
    <property type="status" value="ALT_SEQ"/>
    <property type="molecule type" value="Genomic_DNA"/>
</dbReference>
<dbReference type="EMBL" id="BK010421">
    <property type="protein sequence ID" value="DAB41505.2"/>
    <property type="molecule type" value="Genomic_DNA"/>
</dbReference>
<dbReference type="EMBL" id="AC006225">
    <property type="status" value="NOT_ANNOTATED_CDS"/>
    <property type="molecule type" value="Genomic_DNA"/>
</dbReference>
<dbReference type="EMBL" id="EF488922">
    <property type="protein sequence ID" value="ABS50634.1"/>
    <property type="molecule type" value="mRNA"/>
</dbReference>
<dbReference type="EMBL" id="EF488923">
    <property type="protein sequence ID" value="ABS50635.1"/>
    <property type="molecule type" value="mRNA"/>
</dbReference>
<dbReference type="PIR" id="S28919">
    <property type="entry name" value="S28919"/>
</dbReference>
<dbReference type="RefSeq" id="NP_085495.1">
    <property type="nucleotide sequence ID" value="NC_001284.2"/>
</dbReference>
<dbReference type="PDB" id="7A23">
    <property type="method" value="EM"/>
    <property type="resolution" value="3.70 A"/>
    <property type="chains" value="N=1-205"/>
</dbReference>
<dbReference type="PDB" id="7A24">
    <property type="method" value="EM"/>
    <property type="resolution" value="3.80 A"/>
    <property type="chains" value="N=1-205"/>
</dbReference>
<dbReference type="PDB" id="7AQQ">
    <property type="method" value="EM"/>
    <property type="resolution" value="3.06 A"/>
    <property type="chains" value="J=1-205"/>
</dbReference>
<dbReference type="PDB" id="7AR7">
    <property type="method" value="EM"/>
    <property type="resolution" value="3.72 A"/>
    <property type="chains" value="J=1-205"/>
</dbReference>
<dbReference type="PDB" id="7AR8">
    <property type="method" value="EM"/>
    <property type="resolution" value="3.53 A"/>
    <property type="chains" value="J=1-205"/>
</dbReference>
<dbReference type="PDB" id="7ARB">
    <property type="method" value="EM"/>
    <property type="resolution" value="3.41 A"/>
    <property type="chains" value="J=1-205"/>
</dbReference>
<dbReference type="PDB" id="8BEF">
    <property type="method" value="EM"/>
    <property type="resolution" value="2.13 A"/>
    <property type="chains" value="J=1-205"/>
</dbReference>
<dbReference type="PDB" id="8BPX">
    <property type="method" value="EM"/>
    <property type="resolution" value="2.09 A"/>
    <property type="chains" value="J=1-205"/>
</dbReference>
<dbReference type="PDB" id="8BQ5">
    <property type="method" value="EM"/>
    <property type="resolution" value="2.73 A"/>
    <property type="chains" value="J=1-205"/>
</dbReference>
<dbReference type="PDB" id="8BQ6">
    <property type="method" value="EM"/>
    <property type="resolution" value="2.80 A"/>
    <property type="chains" value="J=1-205"/>
</dbReference>
<dbReference type="PDBsum" id="7A23"/>
<dbReference type="PDBsum" id="7A24"/>
<dbReference type="PDBsum" id="7AQQ"/>
<dbReference type="PDBsum" id="7AR7"/>
<dbReference type="PDBsum" id="7AR8"/>
<dbReference type="PDBsum" id="7ARB"/>
<dbReference type="PDBsum" id="8BEF"/>
<dbReference type="PDBsum" id="8BPX"/>
<dbReference type="PDBsum" id="8BQ5"/>
<dbReference type="PDBsum" id="8BQ6"/>
<dbReference type="EMDB" id="EMD-11872"/>
<dbReference type="EMDB" id="EMD-11875"/>
<dbReference type="EMDB" id="EMD-11876"/>
<dbReference type="EMDB" id="EMD-11878"/>
<dbReference type="EMDB" id="EMD-16000"/>
<dbReference type="EMDB" id="EMD-16168"/>
<dbReference type="EMDB" id="EMD-16171"/>
<dbReference type="EMDB" id="EMD-16172"/>
<dbReference type="SMR" id="P60497"/>
<dbReference type="FunCoup" id="P60497">
    <property type="interactions" value="46"/>
</dbReference>
<dbReference type="IntAct" id="P60497">
    <property type="interactions" value="1"/>
</dbReference>
<dbReference type="STRING" id="3702.A0A2P2CLG1"/>
<dbReference type="PaxDb" id="3702-ATMG00270.1"/>
<dbReference type="Araport" id="ATMG00270"/>
<dbReference type="TAIR" id="ATMG00270">
    <property type="gene designation" value="NAD6"/>
</dbReference>
<dbReference type="eggNOG" id="ENOG502S14H">
    <property type="taxonomic scope" value="Eukaryota"/>
</dbReference>
<dbReference type="InParanoid" id="P60497"/>
<dbReference type="BioCyc" id="ARA:ATMG00270-MONOMER"/>
<dbReference type="PRO" id="PR:P60497"/>
<dbReference type="Proteomes" id="UP000006548">
    <property type="component" value="Mitochondrion MT"/>
</dbReference>
<dbReference type="ExpressionAtlas" id="P60497">
    <property type="expression patterns" value="baseline and differential"/>
</dbReference>
<dbReference type="GO" id="GO:0031966">
    <property type="term" value="C:mitochondrial membrane"/>
    <property type="evidence" value="ECO:0007669"/>
    <property type="project" value="UniProtKB-SubCell"/>
</dbReference>
<dbReference type="GO" id="GO:0008137">
    <property type="term" value="F:NADH dehydrogenase (ubiquinone) activity"/>
    <property type="evidence" value="ECO:0007669"/>
    <property type="project" value="UniProtKB-EC"/>
</dbReference>
<dbReference type="FunFam" id="1.20.120.1200:FF:000003">
    <property type="entry name" value="NADH-ubiquinone oxidoreductase chain 6"/>
    <property type="match status" value="1"/>
</dbReference>
<dbReference type="Gene3D" id="1.20.120.1200">
    <property type="entry name" value="NADH-ubiquinone/plastoquinone oxidoreductase chain 6, subunit NuoJ"/>
    <property type="match status" value="1"/>
</dbReference>
<dbReference type="InterPro" id="IPR001457">
    <property type="entry name" value="NADH_UbQ/plastoQ_OxRdtase_su6"/>
</dbReference>
<dbReference type="InterPro" id="IPR042106">
    <property type="entry name" value="Nuo/plastoQ_OxRdtase_6_NuoJ"/>
</dbReference>
<dbReference type="NCBIfam" id="NF005164">
    <property type="entry name" value="PRK06638.1-4"/>
    <property type="match status" value="1"/>
</dbReference>
<dbReference type="PANTHER" id="PTHR33269">
    <property type="entry name" value="NADH-UBIQUINONE OXIDOREDUCTASE CHAIN 6"/>
    <property type="match status" value="1"/>
</dbReference>
<dbReference type="PANTHER" id="PTHR33269:SF17">
    <property type="entry name" value="NADH-UBIQUINONE OXIDOREDUCTASE CHAIN 6"/>
    <property type="match status" value="1"/>
</dbReference>
<dbReference type="Pfam" id="PF00499">
    <property type="entry name" value="Oxidored_q3"/>
    <property type="match status" value="1"/>
</dbReference>
<proteinExistence type="evidence at protein level"/>
<accession>P60497</accession>
<accession>A0A2P2CLG1</accession>
<accession>A7KNH9</accession>
<accession>Q01825</accession>
<comment type="function">
    <text evidence="1">Core subunit of the mitochondrial membrane respiratory chain NADH dehydrogenase (Complex I) that is believed to belong to the minimal assembly required for catalysis. Complex I functions in the transfer of electrons from NADH to the respiratory chain. The immediate electron acceptor for the enzyme is believed to be ubiquinone (By similarity).</text>
</comment>
<comment type="catalytic activity">
    <reaction>
        <text>a ubiquinone + NADH + 5 H(+)(in) = a ubiquinol + NAD(+) + 4 H(+)(out)</text>
        <dbReference type="Rhea" id="RHEA:29091"/>
        <dbReference type="Rhea" id="RHEA-COMP:9565"/>
        <dbReference type="Rhea" id="RHEA-COMP:9566"/>
        <dbReference type="ChEBI" id="CHEBI:15378"/>
        <dbReference type="ChEBI" id="CHEBI:16389"/>
        <dbReference type="ChEBI" id="CHEBI:17976"/>
        <dbReference type="ChEBI" id="CHEBI:57540"/>
        <dbReference type="ChEBI" id="CHEBI:57945"/>
        <dbReference type="EC" id="7.1.1.2"/>
    </reaction>
</comment>
<comment type="subunit">
    <text>Complex I is composed of at least 49 different subunits.</text>
</comment>
<comment type="subcellular location">
    <subcellularLocation>
        <location evidence="6">Mitochondrion membrane</location>
        <topology evidence="6">Multi-pass membrane protein</topology>
    </subcellularLocation>
</comment>
<comment type="RNA editing">
    <location>
        <position position="9" evidence="3 4 5"/>
    </location>
    <location>
        <position position="18" evidence="3 4 5"/>
    </location>
    <location>
        <position position="30" evidence="3 4 5"/>
    </location>
    <location>
        <position position="32" evidence="3 4 5"/>
    </location>
    <location>
        <position position="35" evidence="3 4 5"/>
    </location>
    <location>
        <position position="54" evidence="3 4 5"/>
    </location>
    <location>
        <position position="57" evidence="3 4 5"/>
    </location>
    <location>
        <position position="64" evidence="3 4 5"/>
    </location>
    <location>
        <position position="149" evidence="3 4 5"/>
    </location>
    <location>
        <position position="155" evidence="5"/>
    </location>
</comment>
<comment type="miscellaneous">
    <text>A stretch of 270 kb of the mitochondrial genome is duplicated within the centromere of chromosome 2 resulting in the duplication of the gene. The expression of the duplicated gene (At2g07731) is not demonstrated. It is also probably not RNA edited and therefore differs in all the positions known to be edited.</text>
</comment>
<comment type="similarity">
    <text evidence="6">Belongs to the complex I subunit 6 family.</text>
</comment>
<geneLocation type="mitochondrion"/>
<protein>
    <recommendedName>
        <fullName>NADH-ubiquinone oxidoreductase chain 6</fullName>
        <ecNumber>7.1.1.2</ecNumber>
    </recommendedName>
    <alternativeName>
        <fullName>NADH dehydrogenase subunit 6</fullName>
    </alternativeName>
</protein>
<keyword id="KW-0002">3D-structure</keyword>
<keyword id="KW-0249">Electron transport</keyword>
<keyword id="KW-0472">Membrane</keyword>
<keyword id="KW-0496">Mitochondrion</keyword>
<keyword id="KW-0520">NAD</keyword>
<keyword id="KW-1185">Reference proteome</keyword>
<keyword id="KW-0679">Respiratory chain</keyword>
<keyword id="KW-0691">RNA editing</keyword>
<keyword id="KW-1278">Translocase</keyword>
<keyword id="KW-0812">Transmembrane</keyword>
<keyword id="KW-1133">Transmembrane helix</keyword>
<keyword id="KW-0813">Transport</keyword>
<keyword id="KW-0830">Ubiquinone</keyword>
<evidence type="ECO:0000250" key="1"/>
<evidence type="ECO:0000255" key="2"/>
<evidence type="ECO:0000269" key="3">
    <source>
    </source>
</evidence>
<evidence type="ECO:0000269" key="4">
    <source>
    </source>
</evidence>
<evidence type="ECO:0000269" key="5">
    <source>
    </source>
</evidence>
<evidence type="ECO:0000305" key="6"/>
<evidence type="ECO:0007744" key="7">
    <source>
        <dbReference type="PDB" id="8BEF"/>
    </source>
</evidence>
<evidence type="ECO:0007744" key="8">
    <source>
        <dbReference type="PDB" id="8BQ5"/>
    </source>
</evidence>
<evidence type="ECO:0007829" key="9">
    <source>
        <dbReference type="PDB" id="8BEF"/>
    </source>
</evidence>